<gene>
    <name type="ordered locus">BMA10229_A0446</name>
</gene>
<protein>
    <recommendedName>
        <fullName evidence="1">UPF0145 protein BMA10229_A0446</fullName>
    </recommendedName>
</protein>
<organism>
    <name type="scientific">Burkholderia mallei (strain NCTC 10229)</name>
    <dbReference type="NCBI Taxonomy" id="412022"/>
    <lineage>
        <taxon>Bacteria</taxon>
        <taxon>Pseudomonadati</taxon>
        <taxon>Pseudomonadota</taxon>
        <taxon>Betaproteobacteria</taxon>
        <taxon>Burkholderiales</taxon>
        <taxon>Burkholderiaceae</taxon>
        <taxon>Burkholderia</taxon>
        <taxon>pseudomallei group</taxon>
    </lineage>
</organism>
<evidence type="ECO:0000255" key="1">
    <source>
        <dbReference type="HAMAP-Rule" id="MF_00338"/>
    </source>
</evidence>
<name>Y2746_BURM9</name>
<reference key="1">
    <citation type="journal article" date="2010" name="Genome Biol. Evol.">
        <title>Continuing evolution of Burkholderia mallei through genome reduction and large-scale rearrangements.</title>
        <authorList>
            <person name="Losada L."/>
            <person name="Ronning C.M."/>
            <person name="DeShazer D."/>
            <person name="Woods D."/>
            <person name="Fedorova N."/>
            <person name="Kim H.S."/>
            <person name="Shabalina S.A."/>
            <person name="Pearson T.R."/>
            <person name="Brinkac L."/>
            <person name="Tan P."/>
            <person name="Nandi T."/>
            <person name="Crabtree J."/>
            <person name="Badger J."/>
            <person name="Beckstrom-Sternberg S."/>
            <person name="Saqib M."/>
            <person name="Schutzer S.E."/>
            <person name="Keim P."/>
            <person name="Nierman W.C."/>
        </authorList>
    </citation>
    <scope>NUCLEOTIDE SEQUENCE [LARGE SCALE GENOMIC DNA]</scope>
    <source>
        <strain>NCTC 10229</strain>
    </source>
</reference>
<accession>A2S3C6</accession>
<proteinExistence type="inferred from homology"/>
<feature type="chain" id="PRO_1000012980" description="UPF0145 protein BMA10229_A0446">
    <location>
        <begin position="1"/>
        <end position="111"/>
    </location>
</feature>
<dbReference type="EMBL" id="CP000546">
    <property type="protein sequence ID" value="ABN03828.1"/>
    <property type="molecule type" value="Genomic_DNA"/>
</dbReference>
<dbReference type="RefSeq" id="WP_004193399.1">
    <property type="nucleotide sequence ID" value="NC_008836.1"/>
</dbReference>
<dbReference type="SMR" id="A2S3C6"/>
<dbReference type="KEGG" id="bml:BMA10229_A0446"/>
<dbReference type="HOGENOM" id="CLU_117144_1_1_4"/>
<dbReference type="Proteomes" id="UP000002283">
    <property type="component" value="Chromosome I"/>
</dbReference>
<dbReference type="Gene3D" id="3.30.110.70">
    <property type="entry name" value="Hypothetical protein apc22750. Chain B"/>
    <property type="match status" value="1"/>
</dbReference>
<dbReference type="HAMAP" id="MF_00338">
    <property type="entry name" value="UPF0145"/>
    <property type="match status" value="1"/>
</dbReference>
<dbReference type="InterPro" id="IPR035439">
    <property type="entry name" value="UPF0145_dom_sf"/>
</dbReference>
<dbReference type="InterPro" id="IPR002765">
    <property type="entry name" value="UPF0145_YbjQ-like"/>
</dbReference>
<dbReference type="PANTHER" id="PTHR34068:SF2">
    <property type="entry name" value="UPF0145 PROTEIN SCO3412"/>
    <property type="match status" value="1"/>
</dbReference>
<dbReference type="PANTHER" id="PTHR34068">
    <property type="entry name" value="UPF0145 PROTEIN YBJQ"/>
    <property type="match status" value="1"/>
</dbReference>
<dbReference type="Pfam" id="PF01906">
    <property type="entry name" value="YbjQ_1"/>
    <property type="match status" value="1"/>
</dbReference>
<dbReference type="SUPFAM" id="SSF117782">
    <property type="entry name" value="YbjQ-like"/>
    <property type="match status" value="1"/>
</dbReference>
<comment type="similarity">
    <text evidence="1">Belongs to the UPF0145 family.</text>
</comment>
<sequence length="111" mass="11953">MADPQLITTAFDIPGYRIERSLGVARGIVVRSRSIVGTFGASIQTLFGGNISLYTSLCERARQDAYERMIDEARRMGGNAIVGMRYDATEIASGVTEVLCYGTAVQAVRAG</sequence>